<feature type="chain" id="PRO_0000098177" description="Tail virion protein G7P">
    <location>
        <begin position="1"/>
        <end position="33"/>
    </location>
</feature>
<feature type="transmembrane region" description="Helical" evidence="2">
    <location>
        <begin position="10"/>
        <end position="30"/>
    </location>
</feature>
<protein>
    <recommendedName>
        <fullName>Tail virion protein G7P</fullName>
    </recommendedName>
    <alternativeName>
        <fullName>Coat protein C, polypeptide I</fullName>
    </alternativeName>
    <alternativeName>
        <fullName>Gene 7 protein</fullName>
        <shortName>G7P</shortName>
    </alternativeName>
</protein>
<gene>
    <name type="primary">VII</name>
</gene>
<keyword id="KW-0002">3D-structure</keyword>
<keyword id="KW-1043">Host membrane</keyword>
<keyword id="KW-0472">Membrane</keyword>
<keyword id="KW-1185">Reference proteome</keyword>
<keyword id="KW-0812">Transmembrane</keyword>
<keyword id="KW-1133">Transmembrane helix</keyword>
<keyword id="KW-0946">Virion</keyword>
<evidence type="ECO:0000250" key="1"/>
<evidence type="ECO:0000255" key="2"/>
<evidence type="ECO:0000305" key="3"/>
<proteinExistence type="evidence at protein level"/>
<dbReference type="EMBL" id="V00604">
    <property type="protein sequence ID" value="CAA23859.1"/>
    <property type="molecule type" value="Genomic_DNA"/>
</dbReference>
<dbReference type="PIR" id="B04277">
    <property type="entry name" value="Z7BPM3"/>
</dbReference>
<dbReference type="RefSeq" id="NP_510888.1">
    <property type="nucleotide sequence ID" value="NC_003287.2"/>
</dbReference>
<dbReference type="RefSeq" id="YP_010774615.1">
    <property type="nucleotide sequence ID" value="NC_074765.1"/>
</dbReference>
<dbReference type="PDB" id="8IXL">
    <property type="method" value="EM"/>
    <property type="resolution" value="3.50 A"/>
    <property type="chains" value="BA/F/IA/L/S=1-33"/>
</dbReference>
<dbReference type="PDB" id="8JWW">
    <property type="method" value="EM"/>
    <property type="resolution" value="3.50 A"/>
    <property type="chains" value="BA/F/IA/L/S=1-33"/>
</dbReference>
<dbReference type="PDBsum" id="8IXL"/>
<dbReference type="PDBsum" id="8JWW"/>
<dbReference type="EMDB" id="EMD-35795"/>
<dbReference type="SMR" id="P69535"/>
<dbReference type="GeneID" id="80510926"/>
<dbReference type="GeneID" id="927331"/>
<dbReference type="KEGG" id="vg:927331"/>
<dbReference type="Proteomes" id="UP000002111">
    <property type="component" value="Genome"/>
</dbReference>
<dbReference type="GO" id="GO:0033644">
    <property type="term" value="C:host cell membrane"/>
    <property type="evidence" value="ECO:0007669"/>
    <property type="project" value="UniProtKB-SubCell"/>
</dbReference>
<dbReference type="GO" id="GO:0016020">
    <property type="term" value="C:membrane"/>
    <property type="evidence" value="ECO:0007669"/>
    <property type="project" value="UniProtKB-KW"/>
</dbReference>
<dbReference type="GO" id="GO:0044423">
    <property type="term" value="C:virion component"/>
    <property type="evidence" value="ECO:0007669"/>
    <property type="project" value="UniProtKB-KW"/>
</dbReference>
<dbReference type="InterPro" id="IPR045539">
    <property type="entry name" value="Inovirus_G7P_2"/>
</dbReference>
<dbReference type="Pfam" id="PF19978">
    <property type="entry name" value="Inovirus_G7P_2"/>
    <property type="match status" value="1"/>
</dbReference>
<reference key="1">
    <citation type="journal article" date="1980" name="Gene">
        <title>Nucleotide sequence of the filamentous bacteriophage M13 DNA genome: comparison with phage fd.</title>
        <authorList>
            <person name="van Wezenbeek P.M.G.F."/>
            <person name="Hulsebos T.J.M."/>
            <person name="Schoenmakers J.G.G."/>
        </authorList>
    </citation>
    <scope>NUCLEOTIDE SEQUENCE [GENOMIC DNA]</scope>
</reference>
<reference key="2">
    <citation type="journal article" date="1981" name="Proc. Natl. Acad. Sci. U.S.A.">
        <title>Genes VI, VII, and IX of phage M13 code for minor capsid proteins of the virion.</title>
        <authorList>
            <person name="Simons G.F.M."/>
            <person name="Konings R.N.H."/>
            <person name="Schoenmakers J.G.G."/>
        </authorList>
    </citation>
    <scope>CHARACTERIZATION</scope>
</reference>
<organism>
    <name type="scientific">Enterobacteria phage M13</name>
    <name type="common">Bacteriophage M13</name>
    <dbReference type="NCBI Taxonomy" id="1977402"/>
    <lineage>
        <taxon>Viruses</taxon>
        <taxon>Monodnaviria</taxon>
        <taxon>Loebvirae</taxon>
        <taxon>Hofneiviricota</taxon>
        <taxon>Faserviricetes</taxon>
        <taxon>Tubulavirales</taxon>
        <taxon>Inoviridae</taxon>
        <taxon>Inovirus</taxon>
    </lineage>
</organism>
<comment type="function">
    <text>May initiate with G9P the virion concomitant assembly-budding process, by interacting with the packaging signal of the viral genome. The assembly-budding takes place at the host inner membrane. In turn, G7P and G9P are present at the end of the filamentous virion that emerges first from the bacterial host.</text>
</comment>
<comment type="subcellular location">
    <subcellularLocation>
        <location>Virion</location>
    </subcellularLocation>
    <subcellularLocation>
        <location evidence="3">Host membrane</location>
        <topology evidence="3">Single-pass membrane protein</topology>
    </subcellularLocation>
    <text evidence="1">Prior to assembly, is found associated with the bacterial host inner membrane. There are about five copies of this protein per mature phage that are located on the tail side of the filamentous virion with G9P (By similarity).</text>
</comment>
<comment type="similarity">
    <text evidence="3">Belongs to the inovirus G7P protein family.</text>
</comment>
<accession>P69535</accession>
<accession>P03675</accession>
<organismHost>
    <name type="scientific">Escherichia coli</name>
    <dbReference type="NCBI Taxonomy" id="562"/>
</organismHost>
<name>G7P_BPM13</name>
<sequence>MEQVADFDTIYQAMIQISVVLCFALGIIAGGQR</sequence>